<protein>
    <recommendedName>
        <fullName evidence="1">Large ribosomal subunit protein uL23</fullName>
    </recommendedName>
    <alternativeName>
        <fullName evidence="2">50S ribosomal protein L23</fullName>
    </alternativeName>
</protein>
<feature type="chain" id="PRO_0000129421" description="Large ribosomal subunit protein uL23">
    <location>
        <begin position="1"/>
        <end position="100"/>
    </location>
</feature>
<comment type="function">
    <text evidence="1">One of the early assembly proteins it binds 23S rRNA. One of the proteins that surrounds the polypeptide exit tunnel on the outside of the ribosome. Forms the main docking site for trigger factor binding to the ribosome.</text>
</comment>
<comment type="subunit">
    <text evidence="1">Part of the 50S ribosomal subunit. Contacts protein L29, and trigger factor when it is bound to the ribosome.</text>
</comment>
<comment type="miscellaneous">
    <text>Was identified as a high-confidence drug target.</text>
</comment>
<comment type="similarity">
    <text evidence="1">Belongs to the universal ribosomal protein uL23 family.</text>
</comment>
<name>RL23_MYCTU</name>
<organism>
    <name type="scientific">Mycobacterium tuberculosis (strain ATCC 25618 / H37Rv)</name>
    <dbReference type="NCBI Taxonomy" id="83332"/>
    <lineage>
        <taxon>Bacteria</taxon>
        <taxon>Bacillati</taxon>
        <taxon>Actinomycetota</taxon>
        <taxon>Actinomycetes</taxon>
        <taxon>Mycobacteriales</taxon>
        <taxon>Mycobacteriaceae</taxon>
        <taxon>Mycobacterium</taxon>
        <taxon>Mycobacterium tuberculosis complex</taxon>
    </lineage>
</organism>
<reference key="1">
    <citation type="journal article" date="1998" name="Nature">
        <title>Deciphering the biology of Mycobacterium tuberculosis from the complete genome sequence.</title>
        <authorList>
            <person name="Cole S.T."/>
            <person name="Brosch R."/>
            <person name="Parkhill J."/>
            <person name="Garnier T."/>
            <person name="Churcher C.M."/>
            <person name="Harris D.E."/>
            <person name="Gordon S.V."/>
            <person name="Eiglmeier K."/>
            <person name="Gas S."/>
            <person name="Barry C.E. III"/>
            <person name="Tekaia F."/>
            <person name="Badcock K."/>
            <person name="Basham D."/>
            <person name="Brown D."/>
            <person name="Chillingworth T."/>
            <person name="Connor R."/>
            <person name="Davies R.M."/>
            <person name="Devlin K."/>
            <person name="Feltwell T."/>
            <person name="Gentles S."/>
            <person name="Hamlin N."/>
            <person name="Holroyd S."/>
            <person name="Hornsby T."/>
            <person name="Jagels K."/>
            <person name="Krogh A."/>
            <person name="McLean J."/>
            <person name="Moule S."/>
            <person name="Murphy L.D."/>
            <person name="Oliver S."/>
            <person name="Osborne J."/>
            <person name="Quail M.A."/>
            <person name="Rajandream M.A."/>
            <person name="Rogers J."/>
            <person name="Rutter S."/>
            <person name="Seeger K."/>
            <person name="Skelton S."/>
            <person name="Squares S."/>
            <person name="Squares R."/>
            <person name="Sulston J.E."/>
            <person name="Taylor K."/>
            <person name="Whitehead S."/>
            <person name="Barrell B.G."/>
        </authorList>
    </citation>
    <scope>NUCLEOTIDE SEQUENCE [LARGE SCALE GENOMIC DNA]</scope>
    <source>
        <strain>ATCC 25618 / H37Rv</strain>
    </source>
</reference>
<reference key="2">
    <citation type="journal article" date="2008" name="BMC Syst. Biol.">
        <title>targetTB: a target identification pipeline for Mycobacterium tuberculosis through an interactome, reactome and genome-scale structural analysis.</title>
        <authorList>
            <person name="Raman K."/>
            <person name="Yeturu K."/>
            <person name="Chandra N."/>
        </authorList>
    </citation>
    <scope>IDENTIFICATION AS A DRUG TARGET [LARGE SCALE ANALYSIS]</scope>
</reference>
<reference key="3">
    <citation type="journal article" date="2011" name="Mol. Cell. Proteomics">
        <title>Proteogenomic analysis of Mycobacterium tuberculosis by high resolution mass spectrometry.</title>
        <authorList>
            <person name="Kelkar D.S."/>
            <person name="Kumar D."/>
            <person name="Kumar P."/>
            <person name="Balakrishnan L."/>
            <person name="Muthusamy B."/>
            <person name="Yadav A.K."/>
            <person name="Shrivastava P."/>
            <person name="Marimuthu A."/>
            <person name="Anand S."/>
            <person name="Sundaram H."/>
            <person name="Kingsbury R."/>
            <person name="Harsha H.C."/>
            <person name="Nair B."/>
            <person name="Prasad T.S."/>
            <person name="Chauhan D.S."/>
            <person name="Katoch K."/>
            <person name="Katoch V.M."/>
            <person name="Kumar P."/>
            <person name="Chaerkady R."/>
            <person name="Ramachandran S."/>
            <person name="Dash D."/>
            <person name="Pandey A."/>
        </authorList>
    </citation>
    <scope>IDENTIFICATION BY MASS SPECTROMETRY [LARGE SCALE ANALYSIS]</scope>
    <source>
        <strain>ATCC 25618 / H37Rv</strain>
    </source>
</reference>
<proteinExistence type="evidence at protein level"/>
<accession>P9WHB9</accession>
<accession>L0T7G7</accession>
<accession>P95051</accession>
<evidence type="ECO:0000255" key="1">
    <source>
        <dbReference type="HAMAP-Rule" id="MF_01369"/>
    </source>
</evidence>
<evidence type="ECO:0000305" key="2"/>
<gene>
    <name evidence="1" type="primary">rplW</name>
    <name type="ordered locus">Rv0703</name>
    <name type="ORF">MTCY210.22</name>
</gene>
<keyword id="KW-0002">3D-structure</keyword>
<keyword id="KW-1185">Reference proteome</keyword>
<keyword id="KW-0687">Ribonucleoprotein</keyword>
<keyword id="KW-0689">Ribosomal protein</keyword>
<keyword id="KW-0694">RNA-binding</keyword>
<keyword id="KW-0699">rRNA-binding</keyword>
<sequence length="100" mass="10958">MATLADPRDIILAPVISEKSYGLLDDNVYTFLVRPDSNKTQIKIAVEKIFAVKVASVNTANRQGKRKRTRTGYGKRKSTKRAIVTLAPGSRPIDLFGAPA</sequence>
<dbReference type="EMBL" id="AL123456">
    <property type="protein sequence ID" value="CCP43447.1"/>
    <property type="molecule type" value="Genomic_DNA"/>
</dbReference>
<dbReference type="PIR" id="B70642">
    <property type="entry name" value="B70642"/>
</dbReference>
<dbReference type="RefSeq" id="NP_215217.1">
    <property type="nucleotide sequence ID" value="NC_000962.3"/>
</dbReference>
<dbReference type="RefSeq" id="WP_003403581.1">
    <property type="nucleotide sequence ID" value="NZ_NVQJ01000007.1"/>
</dbReference>
<dbReference type="PDB" id="5V7Q">
    <property type="method" value="EM"/>
    <property type="resolution" value="3.70 A"/>
    <property type="chains" value="T=1-100"/>
</dbReference>
<dbReference type="PDB" id="5V93">
    <property type="method" value="EM"/>
    <property type="resolution" value="4.00 A"/>
    <property type="chains" value="T=1-100"/>
</dbReference>
<dbReference type="PDB" id="7KGB">
    <property type="method" value="EM"/>
    <property type="resolution" value="2.70 A"/>
    <property type="chains" value="T=1-100"/>
</dbReference>
<dbReference type="PDB" id="7MSC">
    <property type="method" value="EM"/>
    <property type="resolution" value="2.97 A"/>
    <property type="chains" value="T=1-100"/>
</dbReference>
<dbReference type="PDB" id="7MSH">
    <property type="method" value="EM"/>
    <property type="resolution" value="3.23 A"/>
    <property type="chains" value="T=1-100"/>
</dbReference>
<dbReference type="PDB" id="7MSM">
    <property type="method" value="EM"/>
    <property type="resolution" value="2.79 A"/>
    <property type="chains" value="T=1-100"/>
</dbReference>
<dbReference type="PDB" id="7MSZ">
    <property type="method" value="EM"/>
    <property type="resolution" value="3.10 A"/>
    <property type="chains" value="T=1-100"/>
</dbReference>
<dbReference type="PDB" id="7MT2">
    <property type="method" value="EM"/>
    <property type="resolution" value="2.76 A"/>
    <property type="chains" value="T=1-100"/>
</dbReference>
<dbReference type="PDB" id="7MT3">
    <property type="method" value="EM"/>
    <property type="resolution" value="2.80 A"/>
    <property type="chains" value="T=1-100"/>
</dbReference>
<dbReference type="PDB" id="7MT7">
    <property type="method" value="EM"/>
    <property type="resolution" value="2.71 A"/>
    <property type="chains" value="T=1-100"/>
</dbReference>
<dbReference type="PDB" id="7SFR">
    <property type="method" value="EM"/>
    <property type="resolution" value="2.60 A"/>
    <property type="chains" value="T=1-100"/>
</dbReference>
<dbReference type="PDBsum" id="5V7Q"/>
<dbReference type="PDBsum" id="5V93"/>
<dbReference type="PDBsum" id="7KGB"/>
<dbReference type="PDBsum" id="7MSC"/>
<dbReference type="PDBsum" id="7MSH"/>
<dbReference type="PDBsum" id="7MSM"/>
<dbReference type="PDBsum" id="7MSZ"/>
<dbReference type="PDBsum" id="7MT2"/>
<dbReference type="PDBsum" id="7MT3"/>
<dbReference type="PDBsum" id="7MT7"/>
<dbReference type="PDBsum" id="7SFR"/>
<dbReference type="EMDB" id="EMD-22865"/>
<dbReference type="EMDB" id="EMD-23961"/>
<dbReference type="EMDB" id="EMD-23962"/>
<dbReference type="EMDB" id="EMD-23969"/>
<dbReference type="EMDB" id="EMD-23972"/>
<dbReference type="EMDB" id="EMD-23974"/>
<dbReference type="EMDB" id="EMD-23975"/>
<dbReference type="EMDB" id="EMD-23976"/>
<dbReference type="EMDB" id="EMD-8645"/>
<dbReference type="SMR" id="P9WHB9"/>
<dbReference type="FunCoup" id="P9WHB9">
    <property type="interactions" value="139"/>
</dbReference>
<dbReference type="STRING" id="83332.Rv0703"/>
<dbReference type="PaxDb" id="83332-Rv0703"/>
<dbReference type="GeneID" id="888353"/>
<dbReference type="KEGG" id="mtu:Rv0703"/>
<dbReference type="KEGG" id="mtv:RVBD_0703"/>
<dbReference type="TubercuList" id="Rv0703"/>
<dbReference type="eggNOG" id="COG0089">
    <property type="taxonomic scope" value="Bacteria"/>
</dbReference>
<dbReference type="InParanoid" id="P9WHB9"/>
<dbReference type="OrthoDB" id="9793353at2"/>
<dbReference type="PhylomeDB" id="P9WHB9"/>
<dbReference type="PRO" id="PR:P9WHB9"/>
<dbReference type="Proteomes" id="UP000001584">
    <property type="component" value="Chromosome"/>
</dbReference>
<dbReference type="GO" id="GO:0005829">
    <property type="term" value="C:cytosol"/>
    <property type="evidence" value="ECO:0007005"/>
    <property type="project" value="MTBBASE"/>
</dbReference>
<dbReference type="GO" id="GO:0022625">
    <property type="term" value="C:cytosolic large ribosomal subunit"/>
    <property type="evidence" value="ECO:0000318"/>
    <property type="project" value="GO_Central"/>
</dbReference>
<dbReference type="GO" id="GO:0005886">
    <property type="term" value="C:plasma membrane"/>
    <property type="evidence" value="ECO:0007005"/>
    <property type="project" value="MTBBASE"/>
</dbReference>
<dbReference type="GO" id="GO:0019843">
    <property type="term" value="F:rRNA binding"/>
    <property type="evidence" value="ECO:0007669"/>
    <property type="project" value="UniProtKB-UniRule"/>
</dbReference>
<dbReference type="GO" id="GO:0003735">
    <property type="term" value="F:structural constituent of ribosome"/>
    <property type="evidence" value="ECO:0000318"/>
    <property type="project" value="GO_Central"/>
</dbReference>
<dbReference type="GO" id="GO:0006412">
    <property type="term" value="P:translation"/>
    <property type="evidence" value="ECO:0007669"/>
    <property type="project" value="UniProtKB-UniRule"/>
</dbReference>
<dbReference type="FunFam" id="3.30.70.330:FF:000001">
    <property type="entry name" value="50S ribosomal protein L23"/>
    <property type="match status" value="1"/>
</dbReference>
<dbReference type="Gene3D" id="3.30.70.330">
    <property type="match status" value="1"/>
</dbReference>
<dbReference type="HAMAP" id="MF_01369_B">
    <property type="entry name" value="Ribosomal_uL23_B"/>
    <property type="match status" value="1"/>
</dbReference>
<dbReference type="InterPro" id="IPR012677">
    <property type="entry name" value="Nucleotide-bd_a/b_plait_sf"/>
</dbReference>
<dbReference type="InterPro" id="IPR013025">
    <property type="entry name" value="Ribosomal_uL23-like"/>
</dbReference>
<dbReference type="InterPro" id="IPR012678">
    <property type="entry name" value="Ribosomal_uL23/eL15/eS24_sf"/>
</dbReference>
<dbReference type="InterPro" id="IPR001014">
    <property type="entry name" value="Ribosomal_uL23_CS"/>
</dbReference>
<dbReference type="NCBIfam" id="NF004363">
    <property type="entry name" value="PRK05738.2-4"/>
    <property type="match status" value="1"/>
</dbReference>
<dbReference type="NCBIfam" id="NF004364">
    <property type="entry name" value="PRK05738.2-5"/>
    <property type="match status" value="1"/>
</dbReference>
<dbReference type="PANTHER" id="PTHR11620">
    <property type="entry name" value="60S RIBOSOMAL PROTEIN L23A"/>
    <property type="match status" value="1"/>
</dbReference>
<dbReference type="Pfam" id="PF00276">
    <property type="entry name" value="Ribosomal_L23"/>
    <property type="match status" value="1"/>
</dbReference>
<dbReference type="SUPFAM" id="SSF54189">
    <property type="entry name" value="Ribosomal proteins S24e, L23 and L15e"/>
    <property type="match status" value="1"/>
</dbReference>
<dbReference type="PROSITE" id="PS00050">
    <property type="entry name" value="RIBOSOMAL_L23"/>
    <property type="match status" value="1"/>
</dbReference>